<protein>
    <recommendedName>
        <fullName>Probable envelope ADP,ATP carrier protein, chloroplastic</fullName>
    </recommendedName>
    <alternativeName>
        <fullName>Envelope ADP/ATP translocase</fullName>
    </alternativeName>
</protein>
<feature type="transit peptide" description="Chloroplast" evidence="3">
    <location>
        <begin position="1"/>
        <end position="26"/>
    </location>
</feature>
<feature type="chain" id="PRO_0000313085" description="Probable envelope ADP,ATP carrier protein, chloroplastic">
    <location>
        <begin position="27"/>
        <end position="381"/>
    </location>
</feature>
<feature type="transmembrane region" description="Helical; Name=1" evidence="1">
    <location>
        <begin position="78"/>
        <end position="98"/>
    </location>
</feature>
<feature type="transmembrane region" description="Helical; Name=2" evidence="1">
    <location>
        <begin position="154"/>
        <end position="179"/>
    </location>
</feature>
<feature type="transmembrane region" description="Helical; Name=3" evidence="1">
    <location>
        <begin position="191"/>
        <end position="211"/>
    </location>
</feature>
<feature type="transmembrane region" description="Helical; Name=4" evidence="3">
    <location>
        <begin position="237"/>
        <end position="257"/>
    </location>
</feature>
<feature type="transmembrane region" description="Helical; Name=5" evidence="3">
    <location>
        <begin position="281"/>
        <end position="301"/>
    </location>
</feature>
<feature type="transmembrane region" description="Helical; Name=6" evidence="1">
    <location>
        <begin position="334"/>
        <end position="360"/>
    </location>
</feature>
<feature type="repeat" description="Solcar 1">
    <location>
        <begin position="85"/>
        <end position="177"/>
    </location>
</feature>
<feature type="repeat" description="Solcar 2">
    <location>
        <begin position="185"/>
        <end position="268"/>
    </location>
</feature>
<feature type="repeat" description="Solcar 3">
    <location>
        <begin position="279"/>
        <end position="359"/>
    </location>
</feature>
<feature type="binding site" evidence="2">
    <location>
        <position position="159"/>
    </location>
    <ligand>
        <name>ADP</name>
        <dbReference type="ChEBI" id="CHEBI:456216"/>
    </ligand>
</feature>
<feature type="binding site" evidence="2">
    <location>
        <position position="302"/>
    </location>
    <ligand>
        <name>ADP</name>
        <dbReference type="ChEBI" id="CHEBI:456216"/>
    </ligand>
</feature>
<feature type="sequence conflict" description="In Ref. 1; AAC14414." evidence="5" ref="1">
    <original>G</original>
    <variation>R</variation>
    <location>
        <position position="220"/>
    </location>
</feature>
<dbReference type="EMBL" id="AF049236">
    <property type="protein sequence ID" value="AAC14414.1"/>
    <property type="molecule type" value="Genomic_DNA"/>
</dbReference>
<dbReference type="EMBL" id="CP002686">
    <property type="protein sequence ID" value="AEE78854.1"/>
    <property type="molecule type" value="Genomic_DNA"/>
</dbReference>
<dbReference type="EMBL" id="AK229373">
    <property type="protein sequence ID" value="BAF01235.1"/>
    <property type="molecule type" value="mRNA"/>
</dbReference>
<dbReference type="PIR" id="T51158">
    <property type="entry name" value="T51158"/>
</dbReference>
<dbReference type="RefSeq" id="NP_190755.2">
    <property type="nucleotide sequence ID" value="NM_115046.6"/>
</dbReference>
<dbReference type="SMR" id="O65023"/>
<dbReference type="FunCoup" id="O65023">
    <property type="interactions" value="94"/>
</dbReference>
<dbReference type="STRING" id="3702.O65023"/>
<dbReference type="PaxDb" id="3702-AT3G51870.1"/>
<dbReference type="ProteomicsDB" id="224709"/>
<dbReference type="EnsemblPlants" id="AT3G51870.1">
    <property type="protein sequence ID" value="AT3G51870.1"/>
    <property type="gene ID" value="AT3G51870"/>
</dbReference>
<dbReference type="GeneID" id="824350"/>
<dbReference type="Gramene" id="AT3G51870.1">
    <property type="protein sequence ID" value="AT3G51870.1"/>
    <property type="gene ID" value="AT3G51870"/>
</dbReference>
<dbReference type="KEGG" id="ath:AT3G51870"/>
<dbReference type="Araport" id="AT3G51870"/>
<dbReference type="TAIR" id="AT3G51870"/>
<dbReference type="eggNOG" id="KOG0752">
    <property type="taxonomic scope" value="Eukaryota"/>
</dbReference>
<dbReference type="HOGENOM" id="CLU_015166_10_5_1"/>
<dbReference type="InParanoid" id="O65023"/>
<dbReference type="OMA" id="VQFRHRV"/>
<dbReference type="PRO" id="PR:O65023"/>
<dbReference type="Proteomes" id="UP000006548">
    <property type="component" value="Chromosome 3"/>
</dbReference>
<dbReference type="ExpressionAtlas" id="O65023">
    <property type="expression patterns" value="baseline and differential"/>
</dbReference>
<dbReference type="GO" id="GO:0009507">
    <property type="term" value="C:chloroplast"/>
    <property type="evidence" value="ECO:0007005"/>
    <property type="project" value="TAIR"/>
</dbReference>
<dbReference type="GO" id="GO:0009941">
    <property type="term" value="C:chloroplast envelope"/>
    <property type="evidence" value="ECO:0007005"/>
    <property type="project" value="TAIR"/>
</dbReference>
<dbReference type="GO" id="GO:0031969">
    <property type="term" value="C:chloroplast membrane"/>
    <property type="evidence" value="ECO:0007669"/>
    <property type="project" value="UniProtKB-SubCell"/>
</dbReference>
<dbReference type="GO" id="GO:0009624">
    <property type="term" value="P:response to nematode"/>
    <property type="evidence" value="ECO:0007007"/>
    <property type="project" value="TAIR"/>
</dbReference>
<dbReference type="GO" id="GO:0055085">
    <property type="term" value="P:transmembrane transport"/>
    <property type="evidence" value="ECO:0007669"/>
    <property type="project" value="InterPro"/>
</dbReference>
<dbReference type="FunFam" id="1.50.40.10:FF:000042">
    <property type="entry name" value="Envelope ADP,ATP carrier protein"/>
    <property type="match status" value="1"/>
</dbReference>
<dbReference type="Gene3D" id="1.50.40.10">
    <property type="entry name" value="Mitochondrial carrier domain"/>
    <property type="match status" value="1"/>
</dbReference>
<dbReference type="InterPro" id="IPR002067">
    <property type="entry name" value="Mit_carrier"/>
</dbReference>
<dbReference type="InterPro" id="IPR018108">
    <property type="entry name" value="Mitochondrial_sb/sol_carrier"/>
</dbReference>
<dbReference type="InterPro" id="IPR023395">
    <property type="entry name" value="Mt_carrier_dom_sf"/>
</dbReference>
<dbReference type="PANTHER" id="PTHR24089">
    <property type="entry name" value="SOLUTE CARRIER FAMILY 25"/>
    <property type="match status" value="1"/>
</dbReference>
<dbReference type="Pfam" id="PF00153">
    <property type="entry name" value="Mito_carr"/>
    <property type="match status" value="3"/>
</dbReference>
<dbReference type="PRINTS" id="PR00926">
    <property type="entry name" value="MITOCARRIER"/>
</dbReference>
<dbReference type="SUPFAM" id="SSF103506">
    <property type="entry name" value="Mitochondrial carrier"/>
    <property type="match status" value="1"/>
</dbReference>
<dbReference type="PROSITE" id="PS50920">
    <property type="entry name" value="SOLCAR"/>
    <property type="match status" value="3"/>
</dbReference>
<sequence>MEEDRAILTFHRIPSLNSSLITTSSPAKSGAEQFRRRVLRNPARGDFGLGRFACISLVEKCEQREFAPTTAQLLNNPLAILALVPKDAAIFAAGALAGAAAKTVTAPLDRIKLLMQTHGIRLGQQSAKKAIGFIEAITLIAKEEGVKGYWKGNLPQVIRVLPYSAVQLLAYESYKNLFKGKDDQLSVIGRLAAGACAGMTSTLLTYPLDVLRLRLAVEPGYRTMSQVALSMLRDEGIASFYYGLGPSLVGIAPYIAVNFCIFDLVKKSLPEEYRKKAQSSLLTAVLSAGIATLTCYPLDTVRRQMQMRGTPYKSIPEAFAGIIDRDGLIGLYRGFLPNALKTLPNSSIRLTTFDMVKRLIATSEKQLQKISDDNRNRDQAQ</sequence>
<keyword id="KW-0150">Chloroplast</keyword>
<keyword id="KW-0472">Membrane</keyword>
<keyword id="KW-0934">Plastid</keyword>
<keyword id="KW-1185">Reference proteome</keyword>
<keyword id="KW-0677">Repeat</keyword>
<keyword id="KW-0809">Transit peptide</keyword>
<keyword id="KW-0812">Transmembrane</keyword>
<keyword id="KW-1133">Transmembrane helix</keyword>
<keyword id="KW-0813">Transport</keyword>
<proteinExistence type="evidence at transcript level"/>
<evidence type="ECO:0000250" key="1"/>
<evidence type="ECO:0000250" key="2">
    <source>
        <dbReference type="UniProtKB" id="P02722"/>
    </source>
</evidence>
<evidence type="ECO:0000255" key="3"/>
<evidence type="ECO:0000269" key="4">
    <source ref="4"/>
</evidence>
<evidence type="ECO:0000305" key="5"/>
<comment type="function">
    <text evidence="1">Transports adenine nucleotides.</text>
</comment>
<comment type="subcellular location">
    <subcellularLocation>
        <location evidence="4">Plastid</location>
        <location evidence="4">Chloroplast membrane</location>
        <topology evidence="4">Multi-pass membrane protein</topology>
    </subcellularLocation>
</comment>
<comment type="similarity">
    <text evidence="5">Belongs to the mitochondrial carrier (TC 2.A.29) family.</text>
</comment>
<reference key="1">
    <citation type="journal article" date="1999" name="Plant Mol. Biol.">
        <title>Fine sequence analysis of 60 kb around the Arabidopsis thaliana AtEm1 locus on chromosome III.</title>
        <authorList>
            <person name="Comella P."/>
            <person name="Wu H.-J."/>
            <person name="Laudie M."/>
            <person name="Berger C."/>
            <person name="Cooke R."/>
            <person name="Delseny M."/>
            <person name="Grellet F."/>
        </authorList>
    </citation>
    <scope>NUCLEOTIDE SEQUENCE [LARGE SCALE GENOMIC DNA]</scope>
    <source>
        <strain>cv. Columbia</strain>
    </source>
</reference>
<reference key="2">
    <citation type="journal article" date="2017" name="Plant J.">
        <title>Araport11: a complete reannotation of the Arabidopsis thaliana reference genome.</title>
        <authorList>
            <person name="Cheng C.Y."/>
            <person name="Krishnakumar V."/>
            <person name="Chan A.P."/>
            <person name="Thibaud-Nissen F."/>
            <person name="Schobel S."/>
            <person name="Town C.D."/>
        </authorList>
    </citation>
    <scope>GENOME REANNOTATION</scope>
    <source>
        <strain>cv. Columbia</strain>
    </source>
</reference>
<reference key="3">
    <citation type="submission" date="2006-07" db="EMBL/GenBank/DDBJ databases">
        <title>Large-scale analysis of RIKEN Arabidopsis full-length (RAFL) cDNAs.</title>
        <authorList>
            <person name="Totoki Y."/>
            <person name="Seki M."/>
            <person name="Ishida J."/>
            <person name="Nakajima M."/>
            <person name="Enju A."/>
            <person name="Kamiya A."/>
            <person name="Narusaka M."/>
            <person name="Shin-i T."/>
            <person name="Nakagawa M."/>
            <person name="Sakamoto N."/>
            <person name="Oishi K."/>
            <person name="Kohara Y."/>
            <person name="Kobayashi M."/>
            <person name="Toyoda A."/>
            <person name="Sakaki Y."/>
            <person name="Sakurai T."/>
            <person name="Iida K."/>
            <person name="Akiyama K."/>
            <person name="Satou M."/>
            <person name="Toyoda T."/>
            <person name="Konagaya A."/>
            <person name="Carninci P."/>
            <person name="Kawai J."/>
            <person name="Hayashizaki Y."/>
            <person name="Shinozaki K."/>
        </authorList>
    </citation>
    <scope>NUCLEOTIDE SEQUENCE [LARGE SCALE MRNA]</scope>
    <source>
        <strain>cv. Columbia</strain>
    </source>
</reference>
<reference key="4">
    <citation type="unpublished observations" date="2007-11">
        <authorList>
            <person name="Ruiz Pavon L."/>
            <person name="Spetea C."/>
        </authorList>
    </citation>
    <scope>SUBCELLULAR LOCATION</scope>
</reference>
<reference key="5">
    <citation type="journal article" date="2004" name="Trends Plant Sci.">
        <title>The growing family of mitochondrial carriers in Arabidopsis.</title>
        <authorList>
            <person name="Picault N."/>
            <person name="Hodges M."/>
            <person name="Palmieri L."/>
            <person name="Palmieri F."/>
        </authorList>
    </citation>
    <scope>GENE FAMILY</scope>
</reference>
<name>EAAC_ARATH</name>
<accession>O65023</accession>
<accession>Q0WNR4</accession>
<gene>
    <name type="primary">EAAC</name>
    <name type="ordered locus">At3g51870</name>
    <name type="ORF">ATEM1.12</name>
</gene>
<organism>
    <name type="scientific">Arabidopsis thaliana</name>
    <name type="common">Mouse-ear cress</name>
    <dbReference type="NCBI Taxonomy" id="3702"/>
    <lineage>
        <taxon>Eukaryota</taxon>
        <taxon>Viridiplantae</taxon>
        <taxon>Streptophyta</taxon>
        <taxon>Embryophyta</taxon>
        <taxon>Tracheophyta</taxon>
        <taxon>Spermatophyta</taxon>
        <taxon>Magnoliopsida</taxon>
        <taxon>eudicotyledons</taxon>
        <taxon>Gunneridae</taxon>
        <taxon>Pentapetalae</taxon>
        <taxon>rosids</taxon>
        <taxon>malvids</taxon>
        <taxon>Brassicales</taxon>
        <taxon>Brassicaceae</taxon>
        <taxon>Camelineae</taxon>
        <taxon>Arabidopsis</taxon>
    </lineage>
</organism>